<feature type="chain" id="PRO_1000070022" description="Tyrosine recombinase XerC">
    <location>
        <begin position="1"/>
        <end position="302"/>
    </location>
</feature>
<feature type="domain" description="Core-binding (CB)" evidence="3">
    <location>
        <begin position="2"/>
        <end position="89"/>
    </location>
</feature>
<feature type="domain" description="Tyr recombinase" evidence="2">
    <location>
        <begin position="110"/>
        <end position="289"/>
    </location>
</feature>
<feature type="active site" evidence="1">
    <location>
        <position position="150"/>
    </location>
</feature>
<feature type="active site" evidence="1">
    <location>
        <position position="174"/>
    </location>
</feature>
<feature type="active site" evidence="1">
    <location>
        <position position="241"/>
    </location>
</feature>
<feature type="active site" evidence="1">
    <location>
        <position position="244"/>
    </location>
</feature>
<feature type="active site" evidence="1">
    <location>
        <position position="267"/>
    </location>
</feature>
<feature type="active site" description="O-(3'-phospho-DNA)-tyrosine intermediate" evidence="1">
    <location>
        <position position="276"/>
    </location>
</feature>
<accession>A1AKP9</accession>
<name>XERC_PELPD</name>
<evidence type="ECO:0000255" key="1">
    <source>
        <dbReference type="HAMAP-Rule" id="MF_01808"/>
    </source>
</evidence>
<evidence type="ECO:0000255" key="2">
    <source>
        <dbReference type="PROSITE-ProRule" id="PRU01246"/>
    </source>
</evidence>
<evidence type="ECO:0000255" key="3">
    <source>
        <dbReference type="PROSITE-ProRule" id="PRU01248"/>
    </source>
</evidence>
<dbReference type="EMBL" id="CP000482">
    <property type="protein sequence ID" value="ABK97919.1"/>
    <property type="molecule type" value="Genomic_DNA"/>
</dbReference>
<dbReference type="RefSeq" id="WP_011734233.1">
    <property type="nucleotide sequence ID" value="NC_008609.1"/>
</dbReference>
<dbReference type="SMR" id="A1AKP9"/>
<dbReference type="STRING" id="338966.Ppro_0285"/>
<dbReference type="KEGG" id="ppd:Ppro_0285"/>
<dbReference type="eggNOG" id="COG4974">
    <property type="taxonomic scope" value="Bacteria"/>
</dbReference>
<dbReference type="HOGENOM" id="CLU_027562_9_0_7"/>
<dbReference type="OrthoDB" id="9801717at2"/>
<dbReference type="Proteomes" id="UP000006732">
    <property type="component" value="Chromosome"/>
</dbReference>
<dbReference type="GO" id="GO:0005737">
    <property type="term" value="C:cytoplasm"/>
    <property type="evidence" value="ECO:0007669"/>
    <property type="project" value="UniProtKB-SubCell"/>
</dbReference>
<dbReference type="GO" id="GO:0003677">
    <property type="term" value="F:DNA binding"/>
    <property type="evidence" value="ECO:0007669"/>
    <property type="project" value="UniProtKB-KW"/>
</dbReference>
<dbReference type="GO" id="GO:0009037">
    <property type="term" value="F:tyrosine-based site-specific recombinase activity"/>
    <property type="evidence" value="ECO:0007669"/>
    <property type="project" value="UniProtKB-UniRule"/>
</dbReference>
<dbReference type="GO" id="GO:0051301">
    <property type="term" value="P:cell division"/>
    <property type="evidence" value="ECO:0007669"/>
    <property type="project" value="UniProtKB-KW"/>
</dbReference>
<dbReference type="GO" id="GO:0007059">
    <property type="term" value="P:chromosome segregation"/>
    <property type="evidence" value="ECO:0007669"/>
    <property type="project" value="UniProtKB-UniRule"/>
</dbReference>
<dbReference type="GO" id="GO:0006313">
    <property type="term" value="P:DNA transposition"/>
    <property type="evidence" value="ECO:0007669"/>
    <property type="project" value="UniProtKB-UniRule"/>
</dbReference>
<dbReference type="CDD" id="cd00798">
    <property type="entry name" value="INT_XerDC_C"/>
    <property type="match status" value="1"/>
</dbReference>
<dbReference type="Gene3D" id="1.10.150.130">
    <property type="match status" value="1"/>
</dbReference>
<dbReference type="Gene3D" id="1.10.443.10">
    <property type="entry name" value="Intergrase catalytic core"/>
    <property type="match status" value="1"/>
</dbReference>
<dbReference type="HAMAP" id="MF_01808">
    <property type="entry name" value="Recomb_XerC_XerD"/>
    <property type="match status" value="1"/>
</dbReference>
<dbReference type="InterPro" id="IPR044068">
    <property type="entry name" value="CB"/>
</dbReference>
<dbReference type="InterPro" id="IPR011010">
    <property type="entry name" value="DNA_brk_join_enz"/>
</dbReference>
<dbReference type="InterPro" id="IPR013762">
    <property type="entry name" value="Integrase-like_cat_sf"/>
</dbReference>
<dbReference type="InterPro" id="IPR002104">
    <property type="entry name" value="Integrase_catalytic"/>
</dbReference>
<dbReference type="InterPro" id="IPR010998">
    <property type="entry name" value="Integrase_recombinase_N"/>
</dbReference>
<dbReference type="InterPro" id="IPR004107">
    <property type="entry name" value="Integrase_SAM-like_N"/>
</dbReference>
<dbReference type="InterPro" id="IPR011931">
    <property type="entry name" value="Recomb_XerC"/>
</dbReference>
<dbReference type="InterPro" id="IPR023009">
    <property type="entry name" value="Tyrosine_recombinase_XerC/XerD"/>
</dbReference>
<dbReference type="InterPro" id="IPR050090">
    <property type="entry name" value="Tyrosine_recombinase_XerCD"/>
</dbReference>
<dbReference type="NCBIfam" id="NF001399">
    <property type="entry name" value="PRK00283.1"/>
    <property type="match status" value="1"/>
</dbReference>
<dbReference type="NCBIfam" id="TIGR02224">
    <property type="entry name" value="recomb_XerC"/>
    <property type="match status" value="1"/>
</dbReference>
<dbReference type="PANTHER" id="PTHR30349">
    <property type="entry name" value="PHAGE INTEGRASE-RELATED"/>
    <property type="match status" value="1"/>
</dbReference>
<dbReference type="PANTHER" id="PTHR30349:SF77">
    <property type="entry name" value="TYROSINE RECOMBINASE XERC"/>
    <property type="match status" value="1"/>
</dbReference>
<dbReference type="Pfam" id="PF02899">
    <property type="entry name" value="Phage_int_SAM_1"/>
    <property type="match status" value="1"/>
</dbReference>
<dbReference type="Pfam" id="PF00589">
    <property type="entry name" value="Phage_integrase"/>
    <property type="match status" value="1"/>
</dbReference>
<dbReference type="SUPFAM" id="SSF56349">
    <property type="entry name" value="DNA breaking-rejoining enzymes"/>
    <property type="match status" value="1"/>
</dbReference>
<dbReference type="SUPFAM" id="SSF47823">
    <property type="entry name" value="lambda integrase-like, N-terminal domain"/>
    <property type="match status" value="1"/>
</dbReference>
<dbReference type="PROSITE" id="PS51900">
    <property type="entry name" value="CB"/>
    <property type="match status" value="1"/>
</dbReference>
<dbReference type="PROSITE" id="PS51898">
    <property type="entry name" value="TYR_RECOMBINASE"/>
    <property type="match status" value="1"/>
</dbReference>
<comment type="function">
    <text evidence="1">Site-specific tyrosine recombinase, which acts by catalyzing the cutting and rejoining of the recombining DNA molecules. The XerC-XerD complex is essential to convert dimers of the bacterial chromosome into monomers to permit their segregation at cell division. It also contributes to the segregational stability of plasmids.</text>
</comment>
<comment type="subunit">
    <text evidence="1">Forms a cyclic heterotetrameric complex composed of two molecules of XerC and two molecules of XerD.</text>
</comment>
<comment type="subcellular location">
    <subcellularLocation>
        <location evidence="1">Cytoplasm</location>
    </subcellularLocation>
</comment>
<comment type="similarity">
    <text evidence="1">Belongs to the 'phage' integrase family. XerC subfamily.</text>
</comment>
<keyword id="KW-0131">Cell cycle</keyword>
<keyword id="KW-0132">Cell division</keyword>
<keyword id="KW-0159">Chromosome partition</keyword>
<keyword id="KW-0963">Cytoplasm</keyword>
<keyword id="KW-0229">DNA integration</keyword>
<keyword id="KW-0233">DNA recombination</keyword>
<keyword id="KW-0238">DNA-binding</keyword>
<keyword id="KW-1185">Reference proteome</keyword>
<gene>
    <name evidence="1" type="primary">xerC</name>
    <name type="ordered locus">Ppro_0285</name>
</gene>
<protein>
    <recommendedName>
        <fullName evidence="1">Tyrosine recombinase XerC</fullName>
    </recommendedName>
</protein>
<proteinExistence type="inferred from homology"/>
<organism>
    <name type="scientific">Pelobacter propionicus (strain DSM 2379 / NBRC 103807 / OttBd1)</name>
    <dbReference type="NCBI Taxonomy" id="338966"/>
    <lineage>
        <taxon>Bacteria</taxon>
        <taxon>Pseudomonadati</taxon>
        <taxon>Thermodesulfobacteriota</taxon>
        <taxon>Desulfuromonadia</taxon>
        <taxon>Desulfuromonadales</taxon>
        <taxon>Desulfuromonadaceae</taxon>
        <taxon>Pelobacter</taxon>
    </lineage>
</organism>
<sequence>MQPLMEQIRAFRLHLETERNLSPHTLAAYDRDLRQFAAFVAAEMGDSATAEDVDHLLLRRYLAQLGTQIRKSSQGRKLAAIRSFYRHLLRLGSVSRNPAELIATPKREQRLPFHLDIDQATALMETPTEEENYGLRDRAILETLYSSGLRVSELTGLAIRDINLAGGMLRVMGKGGKERIVPLGSRAVRAIQEYLDSRGGGTATAPLFLNSRGDRINRRSVARIVDAHVHEIAAFKHISPHTLRHTFATHMLEGGADLRAIQELLGHASLSTTQKYTHVSLDRLMEVYDKAHPKARTPEPEE</sequence>
<reference key="1">
    <citation type="submission" date="2006-10" db="EMBL/GenBank/DDBJ databases">
        <title>Complete sequence of chromosome of Pelobacter propionicus DSM 2379.</title>
        <authorList>
            <consortium name="US DOE Joint Genome Institute"/>
            <person name="Copeland A."/>
            <person name="Lucas S."/>
            <person name="Lapidus A."/>
            <person name="Barry K."/>
            <person name="Detter J.C."/>
            <person name="Glavina del Rio T."/>
            <person name="Hammon N."/>
            <person name="Israni S."/>
            <person name="Dalin E."/>
            <person name="Tice H."/>
            <person name="Pitluck S."/>
            <person name="Saunders E."/>
            <person name="Brettin T."/>
            <person name="Bruce D."/>
            <person name="Han C."/>
            <person name="Tapia R."/>
            <person name="Schmutz J."/>
            <person name="Larimer F."/>
            <person name="Land M."/>
            <person name="Hauser L."/>
            <person name="Kyrpides N."/>
            <person name="Kim E."/>
            <person name="Lovley D."/>
            <person name="Richardson P."/>
        </authorList>
    </citation>
    <scope>NUCLEOTIDE SEQUENCE [LARGE SCALE GENOMIC DNA]</scope>
    <source>
        <strain>DSM 2379 / NBRC 103807 / OttBd1</strain>
    </source>
</reference>